<comment type="function">
    <text evidence="6">Reversibly catalyzes the transfer of the carbamoyl group from carbamoyl phosphate (CP) to the N(epsilon) atom of ornithine (ORN) to produce L-citrulline, which is a substrate for argininosuccinate synthetase, the enzyme involved in the final step in arginine biosynthesis.</text>
</comment>
<comment type="catalytic activity">
    <reaction evidence="6">
        <text>carbamoyl phosphate + L-ornithine = L-citrulline + phosphate + H(+)</text>
        <dbReference type="Rhea" id="RHEA:19513"/>
        <dbReference type="ChEBI" id="CHEBI:15378"/>
        <dbReference type="ChEBI" id="CHEBI:43474"/>
        <dbReference type="ChEBI" id="CHEBI:46911"/>
        <dbReference type="ChEBI" id="CHEBI:57743"/>
        <dbReference type="ChEBI" id="CHEBI:58228"/>
        <dbReference type="EC" id="2.1.3.3"/>
    </reaction>
</comment>
<comment type="activity regulation">
    <text evidence="3">Competitively inhibited by L-norvaline (NVA).</text>
</comment>
<comment type="pathway">
    <text evidence="5">Amino-acid biosynthesis; L-arginine biosynthesis; L-arginine from L-ornithine and carbamoyl phosphate: step 1/3.</text>
</comment>
<comment type="subunit">
    <text evidence="2 3">Homotrimer.</text>
</comment>
<comment type="subcellular location">
    <subcellularLocation>
        <location evidence="5">Cytoplasm</location>
    </subcellularLocation>
</comment>
<comment type="similarity">
    <text evidence="5">Belongs to the aspartate/ornithine carbamoyltransferase superfamily. OTCase family.</text>
</comment>
<feature type="chain" id="PRO_0000112955" description="Ornithine carbamoyltransferase">
    <location>
        <begin position="1"/>
        <end position="307"/>
    </location>
</feature>
<feature type="binding site" evidence="3 7">
    <location>
        <begin position="50"/>
        <end position="53"/>
    </location>
    <ligand>
        <name>carbamoyl phosphate</name>
        <dbReference type="ChEBI" id="CHEBI:58228"/>
    </ligand>
</feature>
<feature type="binding site" evidence="3 7">
    <location>
        <position position="77"/>
    </location>
    <ligand>
        <name>carbamoyl phosphate</name>
        <dbReference type="ChEBI" id="CHEBI:58228"/>
    </ligand>
</feature>
<feature type="binding site" evidence="3 7">
    <location>
        <position position="101"/>
    </location>
    <ligand>
        <name>carbamoyl phosphate</name>
        <dbReference type="ChEBI" id="CHEBI:58228"/>
    </ligand>
</feature>
<feature type="binding site" evidence="3 7">
    <location>
        <begin position="128"/>
        <end position="131"/>
    </location>
    <ligand>
        <name>carbamoyl phosphate</name>
        <dbReference type="ChEBI" id="CHEBI:58228"/>
    </ligand>
</feature>
<feature type="binding site" evidence="3 7">
    <location>
        <position position="160"/>
    </location>
    <ligand>
        <name>L-ornithine</name>
        <dbReference type="ChEBI" id="CHEBI:46911"/>
    </ligand>
</feature>
<feature type="binding site" evidence="3 7">
    <location>
        <position position="224"/>
    </location>
    <ligand>
        <name>L-ornithine</name>
        <dbReference type="ChEBI" id="CHEBI:46911"/>
    </ligand>
</feature>
<feature type="binding site" evidence="3 7">
    <location>
        <begin position="228"/>
        <end position="229"/>
    </location>
    <ligand>
        <name>L-ornithine</name>
        <dbReference type="ChEBI" id="CHEBI:46911"/>
    </ligand>
</feature>
<feature type="binding site" evidence="3 7">
    <location>
        <begin position="264"/>
        <end position="265"/>
    </location>
    <ligand>
        <name>carbamoyl phosphate</name>
        <dbReference type="ChEBI" id="CHEBI:58228"/>
    </ligand>
</feature>
<feature type="binding site" evidence="3 7">
    <location>
        <position position="292"/>
    </location>
    <ligand>
        <name>carbamoyl phosphate</name>
        <dbReference type="ChEBI" id="CHEBI:58228"/>
    </ligand>
</feature>
<feature type="strand" evidence="8">
    <location>
        <begin position="5"/>
        <end position="7"/>
    </location>
</feature>
<feature type="helix" evidence="8">
    <location>
        <begin position="8"/>
        <end position="10"/>
    </location>
</feature>
<feature type="helix" evidence="8">
    <location>
        <begin position="13"/>
        <end position="28"/>
    </location>
</feature>
<feature type="turn" evidence="8">
    <location>
        <begin position="35"/>
        <end position="39"/>
    </location>
</feature>
<feature type="strand" evidence="8">
    <location>
        <begin position="41"/>
        <end position="48"/>
    </location>
</feature>
<feature type="helix" evidence="8">
    <location>
        <begin position="51"/>
        <end position="63"/>
    </location>
</feature>
<feature type="strand" evidence="8">
    <location>
        <begin position="67"/>
        <end position="71"/>
    </location>
</feature>
<feature type="helix" evidence="10">
    <location>
        <begin position="73"/>
        <end position="75"/>
    </location>
</feature>
<feature type="strand" evidence="8">
    <location>
        <begin position="80"/>
        <end position="82"/>
    </location>
</feature>
<feature type="helix" evidence="8">
    <location>
        <begin position="84"/>
        <end position="94"/>
    </location>
</feature>
<feature type="strand" evidence="8">
    <location>
        <begin position="98"/>
        <end position="101"/>
    </location>
</feature>
<feature type="helix" evidence="8">
    <location>
        <begin position="105"/>
        <end position="114"/>
    </location>
</feature>
<feature type="strand" evidence="8">
    <location>
        <begin position="119"/>
        <end position="123"/>
    </location>
</feature>
<feature type="helix" evidence="8">
    <location>
        <begin position="129"/>
        <end position="143"/>
    </location>
</feature>
<feature type="strand" evidence="8">
    <location>
        <begin position="150"/>
        <end position="155"/>
    </location>
</feature>
<feature type="helix" evidence="8">
    <location>
        <begin position="160"/>
        <end position="171"/>
    </location>
</feature>
<feature type="strand" evidence="8">
    <location>
        <begin position="175"/>
        <end position="179"/>
    </location>
</feature>
<feature type="helix" evidence="8">
    <location>
        <begin position="188"/>
        <end position="201"/>
    </location>
</feature>
<feature type="strand" evidence="8">
    <location>
        <begin position="204"/>
        <end position="209"/>
    </location>
</feature>
<feature type="helix" evidence="8">
    <location>
        <begin position="211"/>
        <end position="215"/>
    </location>
</feature>
<feature type="strand" evidence="8">
    <location>
        <begin position="219"/>
        <end position="223"/>
    </location>
</feature>
<feature type="helix" evidence="9">
    <location>
        <begin position="229"/>
        <end position="231"/>
    </location>
</feature>
<feature type="strand" evidence="9">
    <location>
        <begin position="234"/>
        <end position="236"/>
    </location>
</feature>
<feature type="helix" evidence="8">
    <location>
        <begin position="240"/>
        <end position="245"/>
    </location>
</feature>
<feature type="helix" evidence="8">
    <location>
        <begin position="249"/>
        <end position="254"/>
    </location>
</feature>
<feature type="strand" evidence="8">
    <location>
        <begin position="260"/>
        <end position="263"/>
    </location>
</feature>
<feature type="turn" evidence="8">
    <location>
        <begin position="270"/>
        <end position="272"/>
    </location>
</feature>
<feature type="helix" evidence="8">
    <location>
        <begin position="275"/>
        <end position="278"/>
    </location>
</feature>
<feature type="helix" evidence="8">
    <location>
        <begin position="285"/>
        <end position="306"/>
    </location>
</feature>
<proteinExistence type="evidence at protein level"/>
<protein>
    <recommendedName>
        <fullName evidence="4">Ornithine carbamoyltransferase</fullName>
        <shortName evidence="4">OTCase</shortName>
        <ecNumber evidence="6">2.1.3.3</ecNumber>
    </recommendedName>
</protein>
<evidence type="ECO:0000255" key="1">
    <source>
        <dbReference type="HAMAP-Rule" id="MF_01109"/>
    </source>
</evidence>
<evidence type="ECO:0000269" key="2">
    <source>
    </source>
</evidence>
<evidence type="ECO:0000269" key="3">
    <source>
    </source>
</evidence>
<evidence type="ECO:0000303" key="4">
    <source>
    </source>
</evidence>
<evidence type="ECO:0000305" key="5"/>
<evidence type="ECO:0000305" key="6">
    <source>
    </source>
</evidence>
<evidence type="ECO:0007744" key="7">
    <source>
        <dbReference type="PDB" id="2I6U"/>
    </source>
</evidence>
<evidence type="ECO:0007829" key="8">
    <source>
        <dbReference type="PDB" id="7NNF"/>
    </source>
</evidence>
<evidence type="ECO:0007829" key="9">
    <source>
        <dbReference type="PDB" id="7NNY"/>
    </source>
</evidence>
<evidence type="ECO:0007829" key="10">
    <source>
        <dbReference type="PDB" id="7NOR"/>
    </source>
</evidence>
<keyword id="KW-0002">3D-structure</keyword>
<keyword id="KW-0028">Amino-acid biosynthesis</keyword>
<keyword id="KW-0055">Arginine biosynthesis</keyword>
<keyword id="KW-0963">Cytoplasm</keyword>
<keyword id="KW-1185">Reference proteome</keyword>
<keyword id="KW-0808">Transferase</keyword>
<gene>
    <name evidence="1" type="primary">argF</name>
    <name type="ordered locus">Rv1656</name>
    <name type="ORF">MTCY06H11.21</name>
</gene>
<name>OTC_MYCTU</name>
<organism>
    <name type="scientific">Mycobacterium tuberculosis (strain ATCC 25618 / H37Rv)</name>
    <dbReference type="NCBI Taxonomy" id="83332"/>
    <lineage>
        <taxon>Bacteria</taxon>
        <taxon>Bacillati</taxon>
        <taxon>Actinomycetota</taxon>
        <taxon>Actinomycetes</taxon>
        <taxon>Mycobacteriales</taxon>
        <taxon>Mycobacteriaceae</taxon>
        <taxon>Mycobacterium</taxon>
        <taxon>Mycobacterium tuberculosis complex</taxon>
    </lineage>
</organism>
<sequence>MIRHFLRDDDLSPAEQAEVLELAAELKKDPVSRRPLQGPRGVAVIFDKNSTRTRFSFELGIAQLGGHAVVVDSGSTQLGRDETLQDTAKVLSRYVDAIVWRTFGQERLDAMASVATVPVINALSDEFHPCQVLADLQTIAERKGALRGLRLSYFGDGANNMAHSLLLGGVTAGIHVTVAAPEGFLPDPSVRAAAERRAQDTGASVTVTADAHAAAAGADVLVTDTWTSMGQENDGLDRVKPFRPFQLNSRLLALADSDAIVLHCLPAHRGDEITDAVMDGPASAVWDEAENRLHAQKALLVWLLERS</sequence>
<accession>P9WIT9</accession>
<accession>L0T7B5</accession>
<accession>P0A5M8</accession>
<accession>P94991</accession>
<accession>Q02095</accession>
<reference key="1">
    <citation type="journal article" date="1998" name="Nature">
        <title>Deciphering the biology of Mycobacterium tuberculosis from the complete genome sequence.</title>
        <authorList>
            <person name="Cole S.T."/>
            <person name="Brosch R."/>
            <person name="Parkhill J."/>
            <person name="Garnier T."/>
            <person name="Churcher C.M."/>
            <person name="Harris D.E."/>
            <person name="Gordon S.V."/>
            <person name="Eiglmeier K."/>
            <person name="Gas S."/>
            <person name="Barry C.E. III"/>
            <person name="Tekaia F."/>
            <person name="Badcock K."/>
            <person name="Basham D."/>
            <person name="Brown D."/>
            <person name="Chillingworth T."/>
            <person name="Connor R."/>
            <person name="Davies R.M."/>
            <person name="Devlin K."/>
            <person name="Feltwell T."/>
            <person name="Gentles S."/>
            <person name="Hamlin N."/>
            <person name="Holroyd S."/>
            <person name="Hornsby T."/>
            <person name="Jagels K."/>
            <person name="Krogh A."/>
            <person name="McLean J."/>
            <person name="Moule S."/>
            <person name="Murphy L.D."/>
            <person name="Oliver S."/>
            <person name="Osborne J."/>
            <person name="Quail M.A."/>
            <person name="Rajandream M.A."/>
            <person name="Rogers J."/>
            <person name="Rutter S."/>
            <person name="Seeger K."/>
            <person name="Skelton S."/>
            <person name="Squares S."/>
            <person name="Squares R."/>
            <person name="Sulston J.E."/>
            <person name="Taylor K."/>
            <person name="Whitehead S."/>
            <person name="Barrell B.G."/>
        </authorList>
    </citation>
    <scope>NUCLEOTIDE SEQUENCE [LARGE SCALE GENOMIC DNA]</scope>
    <source>
        <strain>ATCC 25618 / H37Rv</strain>
    </source>
</reference>
<reference key="2">
    <citation type="journal article" date="2006" name="Acta Crystallogr. F">
        <title>Expression, purification, crystallization and preliminary X-ray analysis of two arginine-biosynthetic enzymes from Mycobacterium tuberculosis.</title>
        <authorList>
            <person name="Moradian F."/>
            <person name="Garen C."/>
            <person name="Cherney L."/>
            <person name="Cherney M."/>
            <person name="James M.N."/>
        </authorList>
    </citation>
    <scope>SUBUNIT</scope>
</reference>
<reference key="3">
    <citation type="journal article" date="2011" name="Mol. Cell. Proteomics">
        <title>Proteogenomic analysis of Mycobacterium tuberculosis by high resolution mass spectrometry.</title>
        <authorList>
            <person name="Kelkar D.S."/>
            <person name="Kumar D."/>
            <person name="Kumar P."/>
            <person name="Balakrishnan L."/>
            <person name="Muthusamy B."/>
            <person name="Yadav A.K."/>
            <person name="Shrivastava P."/>
            <person name="Marimuthu A."/>
            <person name="Anand S."/>
            <person name="Sundaram H."/>
            <person name="Kingsbury R."/>
            <person name="Harsha H.C."/>
            <person name="Nair B."/>
            <person name="Prasad T.S."/>
            <person name="Chauhan D.S."/>
            <person name="Katoch K."/>
            <person name="Katoch V.M."/>
            <person name="Kumar P."/>
            <person name="Chaerkady R."/>
            <person name="Ramachandran S."/>
            <person name="Dash D."/>
            <person name="Pandey A."/>
        </authorList>
    </citation>
    <scope>IDENTIFICATION BY MASS SPECTROMETRY [LARGE SCALE ANALYSIS]</scope>
    <source>
        <strain>ATCC 25618 / H37Rv</strain>
    </source>
</reference>
<reference key="4">
    <citation type="journal article" date="2008" name="J. Mol. Biol.">
        <title>The crystal structures of ornithine carbamoyltransferase from Mycobacterium tuberculosis and its ternary complex with carbamoyl phosphate and L-norvaline reveal the enzyme's catalytic mechanism.</title>
        <authorList>
            <person name="Sankaranarayanan R."/>
            <person name="Cherney M.M."/>
            <person name="Cherney L.T."/>
            <person name="Garen C.R."/>
            <person name="Moradian F."/>
            <person name="James M.N."/>
        </authorList>
    </citation>
    <scope>X-RAY CRYSTALLOGRAPHY (2.2 ANGSTROMS) OF 2-307 IN COMPLEX WITH SUBSTRATE ANALOGS</scope>
    <scope>FUNCTION</scope>
    <scope>CATALYTIC ACTIVITY</scope>
    <scope>ACTIVITY REGULATION</scope>
    <scope>REACTION MECHANISM</scope>
    <scope>SUBUNIT</scope>
</reference>
<dbReference type="EC" id="2.1.3.3" evidence="6"/>
<dbReference type="EMBL" id="AL123456">
    <property type="protein sequence ID" value="CCP44421.1"/>
    <property type="molecule type" value="Genomic_DNA"/>
</dbReference>
<dbReference type="PIR" id="C70621">
    <property type="entry name" value="C70621"/>
</dbReference>
<dbReference type="RefSeq" id="NP_216172.1">
    <property type="nucleotide sequence ID" value="NC_000962.3"/>
</dbReference>
<dbReference type="RefSeq" id="WP_003408165.1">
    <property type="nucleotide sequence ID" value="NZ_NVQJ01000069.1"/>
</dbReference>
<dbReference type="PDB" id="2I6U">
    <property type="method" value="X-ray"/>
    <property type="resolution" value="2.20 A"/>
    <property type="chains" value="A/B/C=2-307"/>
</dbReference>
<dbReference type="PDB" id="2P2G">
    <property type="method" value="X-ray"/>
    <property type="resolution" value="2.70 A"/>
    <property type="chains" value="A/B/C/D/E/F=2-307"/>
</dbReference>
<dbReference type="PDB" id="7NNF">
    <property type="method" value="X-ray"/>
    <property type="resolution" value="1.52 A"/>
    <property type="chains" value="A/B/C/D/E/F=2-307"/>
</dbReference>
<dbReference type="PDB" id="7NNV">
    <property type="method" value="X-ray"/>
    <property type="resolution" value="1.67 A"/>
    <property type="chains" value="A/B/C/D/E/F=2-307"/>
</dbReference>
<dbReference type="PDB" id="7NNW">
    <property type="method" value="X-ray"/>
    <property type="resolution" value="1.78 A"/>
    <property type="chains" value="A/B/C/D/E/F=2-307"/>
</dbReference>
<dbReference type="PDB" id="7NNY">
    <property type="method" value="X-ray"/>
    <property type="resolution" value="1.57 A"/>
    <property type="chains" value="A/B/C/D/E/F=2-307"/>
</dbReference>
<dbReference type="PDB" id="7NNZ">
    <property type="method" value="X-ray"/>
    <property type="resolution" value="1.68 A"/>
    <property type="chains" value="A/B/C/D/E/F=2-307"/>
</dbReference>
<dbReference type="PDB" id="7NOR">
    <property type="method" value="X-ray"/>
    <property type="resolution" value="1.59 A"/>
    <property type="chains" value="A/B/C/D/E/F=2-307"/>
</dbReference>
<dbReference type="PDB" id="7NOS">
    <property type="method" value="X-ray"/>
    <property type="resolution" value="1.77 A"/>
    <property type="chains" value="A/B/C/D/E/F=2-307"/>
</dbReference>
<dbReference type="PDB" id="7NOU">
    <property type="method" value="X-ray"/>
    <property type="resolution" value="1.98 A"/>
    <property type="chains" value="A/B/C/D/E/F=2-307"/>
</dbReference>
<dbReference type="PDB" id="7NOV">
    <property type="method" value="X-ray"/>
    <property type="resolution" value="1.90 A"/>
    <property type="chains" value="A/B/C/D/E/F=2-307"/>
</dbReference>
<dbReference type="PDB" id="7NP0">
    <property type="method" value="X-ray"/>
    <property type="resolution" value="1.76 A"/>
    <property type="chains" value="A/B/C/D/E/F=2-307"/>
</dbReference>
<dbReference type="PDBsum" id="2I6U"/>
<dbReference type="PDBsum" id="2P2G"/>
<dbReference type="PDBsum" id="7NNF"/>
<dbReference type="PDBsum" id="7NNV"/>
<dbReference type="PDBsum" id="7NNW"/>
<dbReference type="PDBsum" id="7NNY"/>
<dbReference type="PDBsum" id="7NNZ"/>
<dbReference type="PDBsum" id="7NOR"/>
<dbReference type="PDBsum" id="7NOS"/>
<dbReference type="PDBsum" id="7NOU"/>
<dbReference type="PDBsum" id="7NOV"/>
<dbReference type="PDBsum" id="7NP0"/>
<dbReference type="SMR" id="P9WIT9"/>
<dbReference type="FunCoup" id="P9WIT9">
    <property type="interactions" value="409"/>
</dbReference>
<dbReference type="STRING" id="83332.Rv1656"/>
<dbReference type="PaxDb" id="83332-Rv1656"/>
<dbReference type="GeneID" id="885462"/>
<dbReference type="KEGG" id="mtu:Rv1656"/>
<dbReference type="KEGG" id="mtv:RVBD_1656"/>
<dbReference type="TubercuList" id="Rv1656"/>
<dbReference type="eggNOG" id="COG0078">
    <property type="taxonomic scope" value="Bacteria"/>
</dbReference>
<dbReference type="InParanoid" id="P9WIT9"/>
<dbReference type="OrthoDB" id="9802587at2"/>
<dbReference type="PhylomeDB" id="P9WIT9"/>
<dbReference type="BRENDA" id="2.1.3.3">
    <property type="organism ID" value="3445"/>
</dbReference>
<dbReference type="UniPathway" id="UPA00068">
    <property type="reaction ID" value="UER00112"/>
</dbReference>
<dbReference type="EvolutionaryTrace" id="P9WIT9"/>
<dbReference type="Proteomes" id="UP000001584">
    <property type="component" value="Chromosome"/>
</dbReference>
<dbReference type="GO" id="GO:0005737">
    <property type="term" value="C:cytoplasm"/>
    <property type="evidence" value="ECO:0007669"/>
    <property type="project" value="UniProtKB-SubCell"/>
</dbReference>
<dbReference type="GO" id="GO:0016597">
    <property type="term" value="F:amino acid binding"/>
    <property type="evidence" value="ECO:0007669"/>
    <property type="project" value="InterPro"/>
</dbReference>
<dbReference type="GO" id="GO:0004585">
    <property type="term" value="F:ornithine carbamoyltransferase activity"/>
    <property type="evidence" value="ECO:0000314"/>
    <property type="project" value="MTBBASE"/>
</dbReference>
<dbReference type="GO" id="GO:0042450">
    <property type="term" value="P:arginine biosynthetic process via ornithine"/>
    <property type="evidence" value="ECO:0000318"/>
    <property type="project" value="GO_Central"/>
</dbReference>
<dbReference type="GO" id="GO:0019240">
    <property type="term" value="P:citrulline biosynthetic process"/>
    <property type="evidence" value="ECO:0000318"/>
    <property type="project" value="GO_Central"/>
</dbReference>
<dbReference type="GO" id="GO:0006526">
    <property type="term" value="P:L-arginine biosynthetic process"/>
    <property type="evidence" value="ECO:0000315"/>
    <property type="project" value="MTBBASE"/>
</dbReference>
<dbReference type="FunFam" id="3.40.50.1370:FF:000008">
    <property type="entry name" value="Ornithine carbamoyltransferase"/>
    <property type="match status" value="1"/>
</dbReference>
<dbReference type="Gene3D" id="3.40.50.1370">
    <property type="entry name" value="Aspartate/ornithine carbamoyltransferase"/>
    <property type="match status" value="2"/>
</dbReference>
<dbReference type="HAMAP" id="MF_01109">
    <property type="entry name" value="OTCase"/>
    <property type="match status" value="1"/>
</dbReference>
<dbReference type="InterPro" id="IPR006132">
    <property type="entry name" value="Asp/Orn_carbamoyltranf_P-bd"/>
</dbReference>
<dbReference type="InterPro" id="IPR006130">
    <property type="entry name" value="Asp/Orn_carbamoylTrfase"/>
</dbReference>
<dbReference type="InterPro" id="IPR036901">
    <property type="entry name" value="Asp/Orn_carbamoylTrfase_sf"/>
</dbReference>
<dbReference type="InterPro" id="IPR006131">
    <property type="entry name" value="Asp_carbamoyltransf_Asp/Orn-bd"/>
</dbReference>
<dbReference type="InterPro" id="IPR002292">
    <property type="entry name" value="Orn/put_carbamltrans"/>
</dbReference>
<dbReference type="InterPro" id="IPR024904">
    <property type="entry name" value="OTCase_ArgI"/>
</dbReference>
<dbReference type="NCBIfam" id="TIGR00658">
    <property type="entry name" value="orni_carb_tr"/>
    <property type="match status" value="1"/>
</dbReference>
<dbReference type="NCBIfam" id="NF001986">
    <property type="entry name" value="PRK00779.1"/>
    <property type="match status" value="1"/>
</dbReference>
<dbReference type="PANTHER" id="PTHR45753">
    <property type="entry name" value="ORNITHINE CARBAMOYLTRANSFERASE, MITOCHONDRIAL"/>
    <property type="match status" value="1"/>
</dbReference>
<dbReference type="PANTHER" id="PTHR45753:SF3">
    <property type="entry name" value="ORNITHINE TRANSCARBAMYLASE, MITOCHONDRIAL"/>
    <property type="match status" value="1"/>
</dbReference>
<dbReference type="Pfam" id="PF00185">
    <property type="entry name" value="OTCace"/>
    <property type="match status" value="1"/>
</dbReference>
<dbReference type="Pfam" id="PF02729">
    <property type="entry name" value="OTCace_N"/>
    <property type="match status" value="1"/>
</dbReference>
<dbReference type="PRINTS" id="PR00100">
    <property type="entry name" value="AOTCASE"/>
</dbReference>
<dbReference type="PRINTS" id="PR00102">
    <property type="entry name" value="OTCASE"/>
</dbReference>
<dbReference type="SUPFAM" id="SSF53671">
    <property type="entry name" value="Aspartate/ornithine carbamoyltransferase"/>
    <property type="match status" value="1"/>
</dbReference>
<dbReference type="PROSITE" id="PS00097">
    <property type="entry name" value="CARBAMOYLTRANSFERASE"/>
    <property type="match status" value="1"/>
</dbReference>